<gene>
    <name type="primary">Pck2</name>
</gene>
<dbReference type="EC" id="4.1.1.32" evidence="3"/>
<dbReference type="EMBL" id="AK030501">
    <property type="protein sequence ID" value="BAC26991.1"/>
    <property type="status" value="ALT_INIT"/>
    <property type="molecule type" value="mRNA"/>
</dbReference>
<dbReference type="EMBL" id="AK031612">
    <property type="protein sequence ID" value="BAC27477.1"/>
    <property type="molecule type" value="mRNA"/>
</dbReference>
<dbReference type="EMBL" id="AK034927">
    <property type="protein sequence ID" value="BAC28883.1"/>
    <property type="molecule type" value="mRNA"/>
</dbReference>
<dbReference type="EMBL" id="BC010318">
    <property type="protein sequence ID" value="AAH10318.1"/>
    <property type="molecule type" value="mRNA"/>
</dbReference>
<dbReference type="CCDS" id="CCDS27114.2"/>
<dbReference type="RefSeq" id="NP_083270.2">
    <property type="nucleotide sequence ID" value="NM_028994.3"/>
</dbReference>
<dbReference type="SMR" id="Q8BH04"/>
<dbReference type="BioGRID" id="216837">
    <property type="interactions" value="7"/>
</dbReference>
<dbReference type="FunCoup" id="Q8BH04">
    <property type="interactions" value="1239"/>
</dbReference>
<dbReference type="STRING" id="10090.ENSMUSP00000038555"/>
<dbReference type="iPTMnet" id="Q8BH04"/>
<dbReference type="MetOSite" id="Q8BH04"/>
<dbReference type="PhosphoSitePlus" id="Q8BH04"/>
<dbReference type="SwissPalm" id="Q8BH04"/>
<dbReference type="jPOST" id="Q8BH04"/>
<dbReference type="PaxDb" id="10090-ENSMUSP00000038555"/>
<dbReference type="PeptideAtlas" id="Q8BH04"/>
<dbReference type="ProteomicsDB" id="287892"/>
<dbReference type="Pumba" id="Q8BH04"/>
<dbReference type="Antibodypedia" id="8846">
    <property type="antibodies" value="308 antibodies from 35 providers"/>
</dbReference>
<dbReference type="DNASU" id="74551"/>
<dbReference type="Ensembl" id="ENSMUST00000226519.2">
    <property type="protein sequence ID" value="ENSMUSP00000153733.2"/>
    <property type="gene ID" value="ENSMUSG00000040618.8"/>
</dbReference>
<dbReference type="GeneID" id="74551"/>
<dbReference type="KEGG" id="mmu:74551"/>
<dbReference type="UCSC" id="uc007tyy.1">
    <property type="organism name" value="mouse"/>
</dbReference>
<dbReference type="AGR" id="MGI:1860456"/>
<dbReference type="CTD" id="5106"/>
<dbReference type="MGI" id="MGI:1860456">
    <property type="gene designation" value="Pck2"/>
</dbReference>
<dbReference type="VEuPathDB" id="HostDB:ENSMUSG00000040618"/>
<dbReference type="eggNOG" id="KOG3749">
    <property type="taxonomic scope" value="Eukaryota"/>
</dbReference>
<dbReference type="GeneTree" id="ENSGT00390000001912"/>
<dbReference type="InParanoid" id="Q8BH04"/>
<dbReference type="OMA" id="SEHMFIT"/>
<dbReference type="OrthoDB" id="5841594at2759"/>
<dbReference type="PhylomeDB" id="Q8BH04"/>
<dbReference type="TreeFam" id="TF314402"/>
<dbReference type="Reactome" id="R-MMU-70263">
    <property type="pathway name" value="Gluconeogenesis"/>
</dbReference>
<dbReference type="UniPathway" id="UPA00138"/>
<dbReference type="BioGRID-ORCS" id="74551">
    <property type="hits" value="2 hits in 77 CRISPR screens"/>
</dbReference>
<dbReference type="ChiTaRS" id="Pck2">
    <property type="organism name" value="mouse"/>
</dbReference>
<dbReference type="PRO" id="PR:Q8BH04"/>
<dbReference type="Proteomes" id="UP000000589">
    <property type="component" value="Chromosome 14"/>
</dbReference>
<dbReference type="RNAct" id="Q8BH04">
    <property type="molecule type" value="protein"/>
</dbReference>
<dbReference type="Bgee" id="ENSMUSG00000040618">
    <property type="expression patterns" value="Expressed in vault of skull and 249 other cell types or tissues"/>
</dbReference>
<dbReference type="ExpressionAtlas" id="Q8BH04">
    <property type="expression patterns" value="baseline and differential"/>
</dbReference>
<dbReference type="GO" id="GO:0005759">
    <property type="term" value="C:mitochondrial matrix"/>
    <property type="evidence" value="ECO:0000314"/>
    <property type="project" value="MGI"/>
</dbReference>
<dbReference type="GO" id="GO:0005739">
    <property type="term" value="C:mitochondrion"/>
    <property type="evidence" value="ECO:0007005"/>
    <property type="project" value="MGI"/>
</dbReference>
<dbReference type="GO" id="GO:0005525">
    <property type="term" value="F:GTP binding"/>
    <property type="evidence" value="ECO:0007669"/>
    <property type="project" value="UniProtKB-KW"/>
</dbReference>
<dbReference type="GO" id="GO:0030145">
    <property type="term" value="F:manganese ion binding"/>
    <property type="evidence" value="ECO:0007669"/>
    <property type="project" value="Ensembl"/>
</dbReference>
<dbReference type="GO" id="GO:0004613">
    <property type="term" value="F:phosphoenolpyruvate carboxykinase (GTP) activity"/>
    <property type="evidence" value="ECO:0000314"/>
    <property type="project" value="MGI"/>
</dbReference>
<dbReference type="GO" id="GO:0071333">
    <property type="term" value="P:cellular response to glucose stimulus"/>
    <property type="evidence" value="ECO:0007669"/>
    <property type="project" value="Ensembl"/>
</dbReference>
<dbReference type="GO" id="GO:0071356">
    <property type="term" value="P:cellular response to tumor necrosis factor"/>
    <property type="evidence" value="ECO:0007669"/>
    <property type="project" value="Ensembl"/>
</dbReference>
<dbReference type="GO" id="GO:0006094">
    <property type="term" value="P:gluconeogenesis"/>
    <property type="evidence" value="ECO:0000316"/>
    <property type="project" value="MGI"/>
</dbReference>
<dbReference type="GO" id="GO:0006107">
    <property type="term" value="P:oxaloacetate metabolic process"/>
    <property type="evidence" value="ECO:0007669"/>
    <property type="project" value="Ensembl"/>
</dbReference>
<dbReference type="GO" id="GO:0032024">
    <property type="term" value="P:positive regulation of insulin secretion"/>
    <property type="evidence" value="ECO:0007669"/>
    <property type="project" value="Ensembl"/>
</dbReference>
<dbReference type="GO" id="GO:0006090">
    <property type="term" value="P:pyruvate metabolic process"/>
    <property type="evidence" value="ECO:0007669"/>
    <property type="project" value="Ensembl"/>
</dbReference>
<dbReference type="GO" id="GO:0071548">
    <property type="term" value="P:response to dexamethasone"/>
    <property type="evidence" value="ECO:0007669"/>
    <property type="project" value="Ensembl"/>
</dbReference>
<dbReference type="GO" id="GO:0032496">
    <property type="term" value="P:response to lipopolysaccharide"/>
    <property type="evidence" value="ECO:0007669"/>
    <property type="project" value="Ensembl"/>
</dbReference>
<dbReference type="CDD" id="cd00819">
    <property type="entry name" value="PEPCK_GTP"/>
    <property type="match status" value="1"/>
</dbReference>
<dbReference type="FunFam" id="3.90.228.20:FF:000005">
    <property type="entry name" value="Phosphoenolpyruvate carboxykinase [GTP], mitochondrial"/>
    <property type="match status" value="1"/>
</dbReference>
<dbReference type="FunFam" id="3.90.228.20:FF:000006">
    <property type="entry name" value="Phosphoenolpyruvate carboxykinase [GTP], mitochondrial"/>
    <property type="match status" value="1"/>
</dbReference>
<dbReference type="FunFam" id="2.170.8.10:FF:000006">
    <property type="entry name" value="Phosphoenolpyruvate carboxykinase, cytosolic [GTP]"/>
    <property type="match status" value="1"/>
</dbReference>
<dbReference type="FunFam" id="3.40.449.10:FF:000003">
    <property type="entry name" value="Phosphoenolpyruvate carboxykinase, cytosolic [GTP]"/>
    <property type="match status" value="1"/>
</dbReference>
<dbReference type="Gene3D" id="3.90.228.20">
    <property type="match status" value="1"/>
</dbReference>
<dbReference type="Gene3D" id="3.40.449.10">
    <property type="entry name" value="Phosphoenolpyruvate Carboxykinase, domain 1"/>
    <property type="match status" value="1"/>
</dbReference>
<dbReference type="Gene3D" id="2.170.8.10">
    <property type="entry name" value="Phosphoenolpyruvate Carboxykinase, domain 2"/>
    <property type="match status" value="1"/>
</dbReference>
<dbReference type="HAMAP" id="MF_00452">
    <property type="entry name" value="PEPCK_GTP"/>
    <property type="match status" value="1"/>
</dbReference>
<dbReference type="InterPro" id="IPR018091">
    <property type="entry name" value="PEP_carboxykin_GTP_CS"/>
</dbReference>
<dbReference type="InterPro" id="IPR013035">
    <property type="entry name" value="PEP_carboxykinase_C"/>
</dbReference>
<dbReference type="InterPro" id="IPR008209">
    <property type="entry name" value="PEP_carboxykinase_GTP"/>
</dbReference>
<dbReference type="InterPro" id="IPR035077">
    <property type="entry name" value="PEP_carboxykinase_GTP_C"/>
</dbReference>
<dbReference type="InterPro" id="IPR035078">
    <property type="entry name" value="PEP_carboxykinase_GTP_N"/>
</dbReference>
<dbReference type="InterPro" id="IPR008210">
    <property type="entry name" value="PEP_carboxykinase_N"/>
</dbReference>
<dbReference type="NCBIfam" id="NF003253">
    <property type="entry name" value="PRK04210.1"/>
    <property type="match status" value="1"/>
</dbReference>
<dbReference type="PANTHER" id="PTHR11561">
    <property type="entry name" value="PHOSPHOENOLPYRUVATE CARBOXYKINASE"/>
    <property type="match status" value="1"/>
</dbReference>
<dbReference type="PANTHER" id="PTHR11561:SF11">
    <property type="entry name" value="PHOSPHOENOLPYRUVATE CARBOXYKINASE [GTP], MITOCHONDRIAL"/>
    <property type="match status" value="1"/>
</dbReference>
<dbReference type="Pfam" id="PF00821">
    <property type="entry name" value="PEPCK_GTP"/>
    <property type="match status" value="1"/>
</dbReference>
<dbReference type="Pfam" id="PF17297">
    <property type="entry name" value="PEPCK_N"/>
    <property type="match status" value="1"/>
</dbReference>
<dbReference type="PIRSF" id="PIRSF001348">
    <property type="entry name" value="PEP_carboxykinase_GTP"/>
    <property type="match status" value="1"/>
</dbReference>
<dbReference type="SUPFAM" id="SSF68923">
    <property type="entry name" value="PEP carboxykinase N-terminal domain"/>
    <property type="match status" value="1"/>
</dbReference>
<dbReference type="SUPFAM" id="SSF53795">
    <property type="entry name" value="PEP carboxykinase-like"/>
    <property type="match status" value="1"/>
</dbReference>
<dbReference type="PROSITE" id="PS00505">
    <property type="entry name" value="PEPCK_GTP"/>
    <property type="match status" value="1"/>
</dbReference>
<comment type="function">
    <text evidence="3 4">Mitochondrial phosphoenolpyruvate carboxykinase that catalyzes the conversion of oxaloacetate (OAA) to phosphoenolpyruvate (PEP), the rate-limiting step in the metabolic pathway that produces glucose from lactate and other precursors derived from the citric acid cycle (By similarity). Can play an active role in glyceroneogenesis and gluconeogenesis (PubMed:33147485).</text>
</comment>
<comment type="catalytic activity">
    <reaction evidence="3">
        <text>oxaloacetate + GTP = phosphoenolpyruvate + GDP + CO2</text>
        <dbReference type="Rhea" id="RHEA:10388"/>
        <dbReference type="ChEBI" id="CHEBI:16452"/>
        <dbReference type="ChEBI" id="CHEBI:16526"/>
        <dbReference type="ChEBI" id="CHEBI:37565"/>
        <dbReference type="ChEBI" id="CHEBI:58189"/>
        <dbReference type="ChEBI" id="CHEBI:58702"/>
        <dbReference type="EC" id="4.1.1.32"/>
    </reaction>
    <physiologicalReaction direction="left-to-right" evidence="3">
        <dbReference type="Rhea" id="RHEA:10389"/>
    </physiologicalReaction>
</comment>
<comment type="cofactor">
    <cofactor evidence="3">
        <name>Mn(2+)</name>
        <dbReference type="ChEBI" id="CHEBI:29035"/>
    </cofactor>
    <text evidence="1">Binds 1 Mn(2+) ion per subunit.</text>
</comment>
<comment type="pathway">
    <text evidence="7">Carbohydrate biosynthesis; gluconeogenesis.</text>
</comment>
<comment type="subunit">
    <text evidence="1">Monomer.</text>
</comment>
<comment type="subcellular location">
    <subcellularLocation>
        <location evidence="3">Mitochondrion</location>
    </subcellularLocation>
</comment>
<comment type="disruption phenotype">
    <text evidence="4 5">Homozygous deficient mice are viable with no overt phenotype (PubMed:33147485, PubMed:36845668). However fasting plasma glucose are elevated from regular chow-fed deficient mice, indicative of defective glucose homeostasis (PubMed:33147485). Deficient mice present abnormal nerve conduction studies and peripheral nerve pathology (PubMed:36845668).</text>
</comment>
<comment type="miscellaneous">
    <text>In eukaryotes there are two isozymes: a cytoplasmic one and a mitochondrial one.</text>
</comment>
<comment type="similarity">
    <text evidence="6">Belongs to the phosphoenolpyruvate carboxykinase [GTP] family.</text>
</comment>
<comment type="sequence caution" evidence="6">
    <conflict type="erroneous initiation">
        <sequence resource="EMBL-CDS" id="BAC26991"/>
    </conflict>
</comment>
<accession>Q8BH04</accession>
<accession>Q8BMM9</accession>
<accession>Q91Z10</accession>
<sequence>MAAMYLPGLRLSRHGLRPWCWSPCRSIQTLHVLSGDMSQLPAGVRDFVARSAHLCQPEGIHICDGTEAENTAILALLEEQGLIRKLPKYKNCWLARTDPKDVARVESKTVIVTPSQRDTVPLLAGGARGQLGNWMSPDEFQRAVDERFPGCMQGRIMYVLPFSMGPVGSPLSRIGVQLTDSAYVVASMRIMTRLGTPVLQALGDGDFIKCLHSVGQPLTGHGDPVGQWPCNPEKTLIGHVPDQREIVSFGSGYGGNSLLGKKCFALRIASRLARDEGWLAEHMLILGITNPAGKKRYVAAAFPSACGKTNLAMMRPALPGWKVECVGDDIAWMRFDSEGQLRAINPENGFFGVAPGTSAATNPNAMATIQSNTLFTNVAETSDGGVYWEGIDQPLPPGVTITSWLGKPWKPGDKEPCAHPNSRFCVPARQCPIMDPAWEAPEGVPIDAIIFGGRRPKGVPLVYEAFNWRHGVFVGSAMRSESTAAAEHKGKTIMHDPFAMRPFFGYNFGRYLEHWLSMEGQKGARLPRIFHVNWFRRDEAGRFLWPGFGENARVLDWICRRLEGEDSAQETPIGLVPKEGALDLSGLSAVDTSQLFSIPKDFWEQEVRDIRGYLTEQVNQDLPKEVLAELEALEGRVQKM</sequence>
<keyword id="KW-0007">Acetylation</keyword>
<keyword id="KW-0210">Decarboxylase</keyword>
<keyword id="KW-0312">Gluconeogenesis</keyword>
<keyword id="KW-0342">GTP-binding</keyword>
<keyword id="KW-0456">Lyase</keyword>
<keyword id="KW-0464">Manganese</keyword>
<keyword id="KW-0479">Metal-binding</keyword>
<keyword id="KW-0496">Mitochondrion</keyword>
<keyword id="KW-0547">Nucleotide-binding</keyword>
<keyword id="KW-0597">Phosphoprotein</keyword>
<keyword id="KW-1185">Reference proteome</keyword>
<keyword id="KW-0809">Transit peptide</keyword>
<feature type="transit peptide" description="Mitochondrion" evidence="1">
    <location>
        <begin position="1"/>
        <end position="32"/>
    </location>
</feature>
<feature type="chain" id="PRO_0000023569" description="Phosphoenolpyruvate carboxykinase [GTP], mitochondrial">
    <location>
        <begin position="33"/>
        <end position="640"/>
    </location>
</feature>
<feature type="binding site" evidence="1">
    <location>
        <position position="104"/>
    </location>
    <ligand>
        <name>phosphoenolpyruvate</name>
        <dbReference type="ChEBI" id="CHEBI:58702"/>
    </ligand>
</feature>
<feature type="binding site" evidence="1">
    <location>
        <position position="255"/>
    </location>
    <ligand>
        <name>phosphoenolpyruvate</name>
        <dbReference type="ChEBI" id="CHEBI:58702"/>
    </ligand>
</feature>
<feature type="binding site" evidence="1">
    <location>
        <position position="262"/>
    </location>
    <ligand>
        <name>Mn(2+)</name>
        <dbReference type="ChEBI" id="CHEBI:29035"/>
    </ligand>
</feature>
<feature type="binding site" evidence="1">
    <location>
        <position position="282"/>
    </location>
    <ligand>
        <name>Mn(2+)</name>
        <dbReference type="ChEBI" id="CHEBI:29035"/>
    </ligand>
</feature>
<feature type="binding site" evidence="1">
    <location>
        <position position="305"/>
    </location>
    <ligand>
        <name>GDP</name>
        <dbReference type="ChEBI" id="CHEBI:58189"/>
    </ligand>
</feature>
<feature type="binding site" evidence="1">
    <location>
        <position position="306"/>
    </location>
    <ligand>
        <name>GDP</name>
        <dbReference type="ChEBI" id="CHEBI:58189"/>
    </ligand>
</feature>
<feature type="binding site" evidence="1">
    <location>
        <position position="306"/>
    </location>
    <ligand>
        <name>Mn(2+)</name>
        <dbReference type="ChEBI" id="CHEBI:29035"/>
    </ligand>
</feature>
<feature type="binding site" evidence="1">
    <location>
        <position position="307"/>
    </location>
    <ligand>
        <name>GDP</name>
        <dbReference type="ChEBI" id="CHEBI:58189"/>
    </ligand>
</feature>
<feature type="binding site" evidence="1">
    <location>
        <position position="308"/>
    </location>
    <ligand>
        <name>GDP</name>
        <dbReference type="ChEBI" id="CHEBI:58189"/>
    </ligand>
</feature>
<feature type="binding site" evidence="1">
    <location>
        <position position="309"/>
    </location>
    <ligand>
        <name>GDP</name>
        <dbReference type="ChEBI" id="CHEBI:58189"/>
    </ligand>
</feature>
<feature type="binding site" evidence="1">
    <location>
        <position position="310"/>
    </location>
    <ligand>
        <name>GDP</name>
        <dbReference type="ChEBI" id="CHEBI:58189"/>
    </ligand>
</feature>
<feature type="binding site" evidence="1">
    <location>
        <position position="329"/>
    </location>
    <ligand>
        <name>Mn(2+)</name>
        <dbReference type="ChEBI" id="CHEBI:29035"/>
    </ligand>
</feature>
<feature type="binding site" evidence="1">
    <location>
        <position position="355"/>
    </location>
    <ligand>
        <name>GDP</name>
        <dbReference type="ChEBI" id="CHEBI:58189"/>
    </ligand>
</feature>
<feature type="binding site" evidence="1">
    <location>
        <position position="421"/>
    </location>
    <ligand>
        <name>phosphoenolpyruvate</name>
        <dbReference type="ChEBI" id="CHEBI:58702"/>
    </ligand>
</feature>
<feature type="binding site" evidence="1">
    <location>
        <position position="423"/>
    </location>
    <ligand>
        <name>phosphoenolpyruvate</name>
        <dbReference type="ChEBI" id="CHEBI:58702"/>
    </ligand>
</feature>
<feature type="binding site" evidence="1">
    <location>
        <position position="454"/>
    </location>
    <ligand>
        <name>GDP</name>
        <dbReference type="ChEBI" id="CHEBI:58189"/>
    </ligand>
</feature>
<feature type="binding site" evidence="1">
    <location>
        <position position="534"/>
    </location>
    <ligand>
        <name>GDP</name>
        <dbReference type="ChEBI" id="CHEBI:58189"/>
    </ligand>
</feature>
<feature type="binding site" evidence="1">
    <location>
        <position position="543"/>
    </location>
    <ligand>
        <name>GDP</name>
        <dbReference type="ChEBI" id="CHEBI:58189"/>
    </ligand>
</feature>
<feature type="binding site" evidence="1">
    <location>
        <position position="548"/>
    </location>
    <ligand>
        <name>GDP</name>
        <dbReference type="ChEBI" id="CHEBI:58189"/>
    </ligand>
</feature>
<feature type="binding site" evidence="1">
    <location>
        <position position="551"/>
    </location>
    <ligand>
        <name>GDP</name>
        <dbReference type="ChEBI" id="CHEBI:58189"/>
    </ligand>
</feature>
<feature type="modified residue" description="N6-acetyllysine" evidence="2">
    <location>
        <position position="88"/>
    </location>
</feature>
<feature type="modified residue" description="Phosphoserine" evidence="3">
    <location>
        <position position="115"/>
    </location>
</feature>
<feature type="modified residue" description="Phosphothreonine" evidence="3">
    <location>
        <position position="196"/>
    </location>
</feature>
<feature type="modified residue" description="Phosphoserine" evidence="8">
    <location>
        <position position="304"/>
    </location>
</feature>
<feature type="modified residue" description="N6-succinyllysine" evidence="9">
    <location>
        <position position="457"/>
    </location>
</feature>
<feature type="sequence conflict" description="In Ref. 2; AAH10318." evidence="6" ref="2">
    <original>H</original>
    <variation>R</variation>
    <location>
        <position position="31"/>
    </location>
</feature>
<feature type="sequence conflict" description="In Ref. 2; AAH10318." evidence="6" ref="2">
    <original>R</original>
    <variation>C</variation>
    <location>
        <position position="542"/>
    </location>
</feature>
<protein>
    <recommendedName>
        <fullName>Phosphoenolpyruvate carboxykinase [GTP], mitochondrial</fullName>
        <shortName>PEPCK-M</shortName>
        <ecNumber evidence="3">4.1.1.32</ecNumber>
    </recommendedName>
</protein>
<evidence type="ECO:0000250" key="1">
    <source>
        <dbReference type="UniProtKB" id="P21642"/>
    </source>
</evidence>
<evidence type="ECO:0000250" key="2">
    <source>
        <dbReference type="UniProtKB" id="P35558"/>
    </source>
</evidence>
<evidence type="ECO:0000250" key="3">
    <source>
        <dbReference type="UniProtKB" id="Q16822"/>
    </source>
</evidence>
<evidence type="ECO:0000269" key="4">
    <source>
    </source>
</evidence>
<evidence type="ECO:0000269" key="5">
    <source>
    </source>
</evidence>
<evidence type="ECO:0000305" key="6"/>
<evidence type="ECO:0000305" key="7">
    <source>
    </source>
</evidence>
<evidence type="ECO:0007744" key="8">
    <source>
    </source>
</evidence>
<evidence type="ECO:0007744" key="9">
    <source>
    </source>
</evidence>
<name>PCKGM_MOUSE</name>
<proteinExistence type="evidence at protein level"/>
<reference key="1">
    <citation type="journal article" date="2005" name="Science">
        <title>The transcriptional landscape of the mammalian genome.</title>
        <authorList>
            <person name="Carninci P."/>
            <person name="Kasukawa T."/>
            <person name="Katayama S."/>
            <person name="Gough J."/>
            <person name="Frith M.C."/>
            <person name="Maeda N."/>
            <person name="Oyama R."/>
            <person name="Ravasi T."/>
            <person name="Lenhard B."/>
            <person name="Wells C."/>
            <person name="Kodzius R."/>
            <person name="Shimokawa K."/>
            <person name="Bajic V.B."/>
            <person name="Brenner S.E."/>
            <person name="Batalov S."/>
            <person name="Forrest A.R."/>
            <person name="Zavolan M."/>
            <person name="Davis M.J."/>
            <person name="Wilming L.G."/>
            <person name="Aidinis V."/>
            <person name="Allen J.E."/>
            <person name="Ambesi-Impiombato A."/>
            <person name="Apweiler R."/>
            <person name="Aturaliya R.N."/>
            <person name="Bailey T.L."/>
            <person name="Bansal M."/>
            <person name="Baxter L."/>
            <person name="Beisel K.W."/>
            <person name="Bersano T."/>
            <person name="Bono H."/>
            <person name="Chalk A.M."/>
            <person name="Chiu K.P."/>
            <person name="Choudhary V."/>
            <person name="Christoffels A."/>
            <person name="Clutterbuck D.R."/>
            <person name="Crowe M.L."/>
            <person name="Dalla E."/>
            <person name="Dalrymple B.P."/>
            <person name="de Bono B."/>
            <person name="Della Gatta G."/>
            <person name="di Bernardo D."/>
            <person name="Down T."/>
            <person name="Engstrom P."/>
            <person name="Fagiolini M."/>
            <person name="Faulkner G."/>
            <person name="Fletcher C.F."/>
            <person name="Fukushima T."/>
            <person name="Furuno M."/>
            <person name="Futaki S."/>
            <person name="Gariboldi M."/>
            <person name="Georgii-Hemming P."/>
            <person name="Gingeras T.R."/>
            <person name="Gojobori T."/>
            <person name="Green R.E."/>
            <person name="Gustincich S."/>
            <person name="Harbers M."/>
            <person name="Hayashi Y."/>
            <person name="Hensch T.K."/>
            <person name="Hirokawa N."/>
            <person name="Hill D."/>
            <person name="Huminiecki L."/>
            <person name="Iacono M."/>
            <person name="Ikeo K."/>
            <person name="Iwama A."/>
            <person name="Ishikawa T."/>
            <person name="Jakt M."/>
            <person name="Kanapin A."/>
            <person name="Katoh M."/>
            <person name="Kawasawa Y."/>
            <person name="Kelso J."/>
            <person name="Kitamura H."/>
            <person name="Kitano H."/>
            <person name="Kollias G."/>
            <person name="Krishnan S.P."/>
            <person name="Kruger A."/>
            <person name="Kummerfeld S.K."/>
            <person name="Kurochkin I.V."/>
            <person name="Lareau L.F."/>
            <person name="Lazarevic D."/>
            <person name="Lipovich L."/>
            <person name="Liu J."/>
            <person name="Liuni S."/>
            <person name="McWilliam S."/>
            <person name="Madan Babu M."/>
            <person name="Madera M."/>
            <person name="Marchionni L."/>
            <person name="Matsuda H."/>
            <person name="Matsuzawa S."/>
            <person name="Miki H."/>
            <person name="Mignone F."/>
            <person name="Miyake S."/>
            <person name="Morris K."/>
            <person name="Mottagui-Tabar S."/>
            <person name="Mulder N."/>
            <person name="Nakano N."/>
            <person name="Nakauchi H."/>
            <person name="Ng P."/>
            <person name="Nilsson R."/>
            <person name="Nishiguchi S."/>
            <person name="Nishikawa S."/>
            <person name="Nori F."/>
            <person name="Ohara O."/>
            <person name="Okazaki Y."/>
            <person name="Orlando V."/>
            <person name="Pang K.C."/>
            <person name="Pavan W.J."/>
            <person name="Pavesi G."/>
            <person name="Pesole G."/>
            <person name="Petrovsky N."/>
            <person name="Piazza S."/>
            <person name="Reed J."/>
            <person name="Reid J.F."/>
            <person name="Ring B.Z."/>
            <person name="Ringwald M."/>
            <person name="Rost B."/>
            <person name="Ruan Y."/>
            <person name="Salzberg S.L."/>
            <person name="Sandelin A."/>
            <person name="Schneider C."/>
            <person name="Schoenbach C."/>
            <person name="Sekiguchi K."/>
            <person name="Semple C.A."/>
            <person name="Seno S."/>
            <person name="Sessa L."/>
            <person name="Sheng Y."/>
            <person name="Shibata Y."/>
            <person name="Shimada H."/>
            <person name="Shimada K."/>
            <person name="Silva D."/>
            <person name="Sinclair B."/>
            <person name="Sperling S."/>
            <person name="Stupka E."/>
            <person name="Sugiura K."/>
            <person name="Sultana R."/>
            <person name="Takenaka Y."/>
            <person name="Taki K."/>
            <person name="Tammoja K."/>
            <person name="Tan S.L."/>
            <person name="Tang S."/>
            <person name="Taylor M.S."/>
            <person name="Tegner J."/>
            <person name="Teichmann S.A."/>
            <person name="Ueda H.R."/>
            <person name="van Nimwegen E."/>
            <person name="Verardo R."/>
            <person name="Wei C.L."/>
            <person name="Yagi K."/>
            <person name="Yamanishi H."/>
            <person name="Zabarovsky E."/>
            <person name="Zhu S."/>
            <person name="Zimmer A."/>
            <person name="Hide W."/>
            <person name="Bult C."/>
            <person name="Grimmond S.M."/>
            <person name="Teasdale R.D."/>
            <person name="Liu E.T."/>
            <person name="Brusic V."/>
            <person name="Quackenbush J."/>
            <person name="Wahlestedt C."/>
            <person name="Mattick J.S."/>
            <person name="Hume D.A."/>
            <person name="Kai C."/>
            <person name="Sasaki D."/>
            <person name="Tomaru Y."/>
            <person name="Fukuda S."/>
            <person name="Kanamori-Katayama M."/>
            <person name="Suzuki M."/>
            <person name="Aoki J."/>
            <person name="Arakawa T."/>
            <person name="Iida J."/>
            <person name="Imamura K."/>
            <person name="Itoh M."/>
            <person name="Kato T."/>
            <person name="Kawaji H."/>
            <person name="Kawagashira N."/>
            <person name="Kawashima T."/>
            <person name="Kojima M."/>
            <person name="Kondo S."/>
            <person name="Konno H."/>
            <person name="Nakano K."/>
            <person name="Ninomiya N."/>
            <person name="Nishio T."/>
            <person name="Okada M."/>
            <person name="Plessy C."/>
            <person name="Shibata K."/>
            <person name="Shiraki T."/>
            <person name="Suzuki S."/>
            <person name="Tagami M."/>
            <person name="Waki K."/>
            <person name="Watahiki A."/>
            <person name="Okamura-Oho Y."/>
            <person name="Suzuki H."/>
            <person name="Kawai J."/>
            <person name="Hayashizaki Y."/>
        </authorList>
    </citation>
    <scope>NUCLEOTIDE SEQUENCE [LARGE SCALE MRNA]</scope>
    <source>
        <strain>C57BL/6J</strain>
        <tissue>Pituitary</tissue>
        <tissue>Testis</tissue>
    </source>
</reference>
<reference key="2">
    <citation type="journal article" date="2004" name="Genome Res.">
        <title>The status, quality, and expansion of the NIH full-length cDNA project: the Mammalian Gene Collection (MGC).</title>
        <authorList>
            <consortium name="The MGC Project Team"/>
        </authorList>
    </citation>
    <scope>NUCLEOTIDE SEQUENCE [LARGE SCALE MRNA]</scope>
    <source>
        <strain>FVB/N</strain>
        <tissue>Mammary tumor</tissue>
    </source>
</reference>
<reference key="3">
    <citation type="journal article" date="2010" name="Cell">
        <title>A tissue-specific atlas of mouse protein phosphorylation and expression.</title>
        <authorList>
            <person name="Huttlin E.L."/>
            <person name="Jedrychowski M.P."/>
            <person name="Elias J.E."/>
            <person name="Goswami T."/>
            <person name="Rad R."/>
            <person name="Beausoleil S.A."/>
            <person name="Villen J."/>
            <person name="Haas W."/>
            <person name="Sowa M.E."/>
            <person name="Gygi S.P."/>
        </authorList>
    </citation>
    <scope>PHOSPHORYLATION [LARGE SCALE ANALYSIS] AT SER-304</scope>
    <scope>IDENTIFICATION BY MASS SPECTROMETRY [LARGE SCALE ANALYSIS]</scope>
    <source>
        <tissue>Brain</tissue>
        <tissue>Brown adipose tissue</tissue>
        <tissue>Heart</tissue>
        <tissue>Kidney</tissue>
        <tissue>Liver</tissue>
        <tissue>Lung</tissue>
        <tissue>Pancreas</tissue>
        <tissue>Spleen</tissue>
        <tissue>Testis</tissue>
    </source>
</reference>
<reference key="4">
    <citation type="journal article" date="2013" name="Mol. Cell">
        <title>SIRT5-mediated lysine desuccinylation impacts diverse metabolic pathways.</title>
        <authorList>
            <person name="Park J."/>
            <person name="Chen Y."/>
            <person name="Tishkoff D.X."/>
            <person name="Peng C."/>
            <person name="Tan M."/>
            <person name="Dai L."/>
            <person name="Xie Z."/>
            <person name="Zhang Y."/>
            <person name="Zwaans B.M."/>
            <person name="Skinner M.E."/>
            <person name="Lombard D.B."/>
            <person name="Zhao Y."/>
        </authorList>
    </citation>
    <scope>SUCCINYLATION [LARGE SCALE ANALYSIS] AT LYS-457</scope>
    <scope>IDENTIFICATION BY MASS SPECTROMETRY [LARGE SCALE ANALYSIS]</scope>
    <source>
        <tissue>Embryonic fibroblast</tissue>
    </source>
</reference>
<reference key="5">
    <citation type="journal article" date="2020" name="Cell Metab.">
        <title>Multi-Tissue Acceleration of the Mitochondrial Phosphoenolpyruvate Cycle Improves Whole-Body Metabolic Health.</title>
        <authorList>
            <person name="Abulizi A."/>
            <person name="Cardone R.L."/>
            <person name="Stark R."/>
            <person name="Lewandowski S.L."/>
            <person name="Zhao X."/>
            <person name="Hillion J."/>
            <person name="Ma L."/>
            <person name="Sehgal R."/>
            <person name="Alves T.C."/>
            <person name="Thomas C."/>
            <person name="Kung C."/>
            <person name="Wang B."/>
            <person name="Siebel S."/>
            <person name="Andrews Z.B."/>
            <person name="Mason G.F."/>
            <person name="Rinehart J."/>
            <person name="Merrins M.J."/>
            <person name="Kibbey R.G."/>
        </authorList>
    </citation>
    <scope>DISRUPTION PHENOTYPE</scope>
    <scope>PATHWAY</scope>
    <scope>FUNCTION</scope>
</reference>
<reference key="6">
    <citation type="journal article" date="2023" name="HGG Adv.">
        <title>Biallelic pathogenic variants in the mitochondrial form of phosphoenolpyruvate carboxykinase cause peripheral neuropathy.</title>
        <authorList>
            <person name="Sondheimer N."/>
            <person name="Aleman A."/>
            <person name="Cameron J."/>
            <person name="Gonorazky H."/>
            <person name="Sabha N."/>
            <person name="Oliveira P."/>
            <person name="Amburgey K."/>
            <person name="Wahedi A."/>
            <person name="Wang D."/>
            <person name="Shy M."/>
            <person name="Dowling J.J."/>
        </authorList>
    </citation>
    <scope>DISRUPTION PHENOTYPE</scope>
</reference>
<organism>
    <name type="scientific">Mus musculus</name>
    <name type="common">Mouse</name>
    <dbReference type="NCBI Taxonomy" id="10090"/>
    <lineage>
        <taxon>Eukaryota</taxon>
        <taxon>Metazoa</taxon>
        <taxon>Chordata</taxon>
        <taxon>Craniata</taxon>
        <taxon>Vertebrata</taxon>
        <taxon>Euteleostomi</taxon>
        <taxon>Mammalia</taxon>
        <taxon>Eutheria</taxon>
        <taxon>Euarchontoglires</taxon>
        <taxon>Glires</taxon>
        <taxon>Rodentia</taxon>
        <taxon>Myomorpha</taxon>
        <taxon>Muroidea</taxon>
        <taxon>Muridae</taxon>
        <taxon>Murinae</taxon>
        <taxon>Mus</taxon>
        <taxon>Mus</taxon>
    </lineage>
</organism>